<evidence type="ECO:0000255" key="1">
    <source>
        <dbReference type="HAMAP-Rule" id="MF_01295"/>
    </source>
</evidence>
<organism>
    <name type="scientific">Escherichia coli O157:H7</name>
    <dbReference type="NCBI Taxonomy" id="83334"/>
    <lineage>
        <taxon>Bacteria</taxon>
        <taxon>Pseudomonadati</taxon>
        <taxon>Pseudomonadota</taxon>
        <taxon>Gammaproteobacteria</taxon>
        <taxon>Enterobacterales</taxon>
        <taxon>Enterobacteriaceae</taxon>
        <taxon>Escherichia</taxon>
    </lineage>
</organism>
<comment type="function">
    <text evidence="1">Component of the tagatose-1,6-bisphosphate aldolase KbaYZ that is required for full activity and stability of the Y subunit. Could have a chaperone-like function for the proper and stable folding of KbaY. When expressed alone, KbaZ does not show any aldolase activity.</text>
</comment>
<comment type="pathway">
    <text evidence="1">Carbohydrate metabolism; D-tagatose 6-phosphate degradation; D-glyceraldehyde 3-phosphate and glycerone phosphate from D-tagatose 6-phosphate: step 2/2.</text>
</comment>
<comment type="subunit">
    <text evidence="1">Forms a complex with KbaY.</text>
</comment>
<comment type="similarity">
    <text evidence="1">Belongs to the GatZ/KbaZ family. KbaZ subfamily.</text>
</comment>
<accession>Q8XAD0</accession>
<accession>Q7AAK8</accession>
<gene>
    <name evidence="1" type="primary">kbaZ</name>
    <name type="synonym">agaZ</name>
    <name type="ordered locus">Z4484</name>
    <name type="ordered locus">ECs4010</name>
</gene>
<dbReference type="EMBL" id="AE005174">
    <property type="protein sequence ID" value="AAG58262.1"/>
    <property type="molecule type" value="Genomic_DNA"/>
</dbReference>
<dbReference type="EMBL" id="BA000007">
    <property type="protein sequence ID" value="BAB37433.1"/>
    <property type="molecule type" value="Genomic_DNA"/>
</dbReference>
<dbReference type="PIR" id="B85975">
    <property type="entry name" value="B85975"/>
</dbReference>
<dbReference type="PIR" id="B91130">
    <property type="entry name" value="B91130"/>
</dbReference>
<dbReference type="RefSeq" id="NP_312037.1">
    <property type="nucleotide sequence ID" value="NC_002695.1"/>
</dbReference>
<dbReference type="RefSeq" id="WP_000681927.1">
    <property type="nucleotide sequence ID" value="NZ_VOAI01000009.1"/>
</dbReference>
<dbReference type="SMR" id="Q8XAD0"/>
<dbReference type="STRING" id="155864.Z4484"/>
<dbReference type="GeneID" id="916154"/>
<dbReference type="KEGG" id="ece:Z4484"/>
<dbReference type="KEGG" id="ecs:ECs_4010"/>
<dbReference type="PATRIC" id="fig|386585.9.peg.4185"/>
<dbReference type="eggNOG" id="COG4573">
    <property type="taxonomic scope" value="Bacteria"/>
</dbReference>
<dbReference type="HOGENOM" id="CLU_053334_0_0_6"/>
<dbReference type="OMA" id="QRHFSYS"/>
<dbReference type="BioCyc" id="MetaCyc:MONOMER-18280"/>
<dbReference type="UniPathway" id="UPA00704">
    <property type="reaction ID" value="UER00716"/>
</dbReference>
<dbReference type="Proteomes" id="UP000000558">
    <property type="component" value="Chromosome"/>
</dbReference>
<dbReference type="Proteomes" id="UP000002519">
    <property type="component" value="Chromosome"/>
</dbReference>
<dbReference type="GO" id="GO:0005886">
    <property type="term" value="C:plasma membrane"/>
    <property type="evidence" value="ECO:0007669"/>
    <property type="project" value="TreeGrafter"/>
</dbReference>
<dbReference type="GO" id="GO:0005975">
    <property type="term" value="P:carbohydrate metabolic process"/>
    <property type="evidence" value="ECO:0007669"/>
    <property type="project" value="InterPro"/>
</dbReference>
<dbReference type="GO" id="GO:2001059">
    <property type="term" value="P:D-tagatose 6-phosphate catabolic process"/>
    <property type="evidence" value="ECO:0007669"/>
    <property type="project" value="UniProtKB-UniRule"/>
</dbReference>
<dbReference type="GO" id="GO:0009401">
    <property type="term" value="P:phosphoenolpyruvate-dependent sugar phosphotransferase system"/>
    <property type="evidence" value="ECO:0007669"/>
    <property type="project" value="TreeGrafter"/>
</dbReference>
<dbReference type="Gene3D" id="3.20.20.70">
    <property type="entry name" value="Aldolase class I"/>
    <property type="match status" value="1"/>
</dbReference>
<dbReference type="Gene3D" id="1.10.400.20">
    <property type="entry name" value="putative tagatose 6-phosphate kinase domain like"/>
    <property type="match status" value="1"/>
</dbReference>
<dbReference type="HAMAP" id="MF_01295">
    <property type="entry name" value="Tagatose_aldol_KbaZ"/>
    <property type="match status" value="1"/>
</dbReference>
<dbReference type="InterPro" id="IPR013785">
    <property type="entry name" value="Aldolase_TIM"/>
</dbReference>
<dbReference type="InterPro" id="IPR012062">
    <property type="entry name" value="GatZ/KbaZ-like"/>
</dbReference>
<dbReference type="InterPro" id="IPR050303">
    <property type="entry name" value="GatZ_KbaZ_carbometab"/>
</dbReference>
<dbReference type="InterPro" id="IPR023435">
    <property type="entry name" value="TagBP_ald_KbaZ"/>
</dbReference>
<dbReference type="NCBIfam" id="TIGR02810">
    <property type="entry name" value="agaZ_gatZ"/>
    <property type="match status" value="1"/>
</dbReference>
<dbReference type="NCBIfam" id="NF012002">
    <property type="entry name" value="PRK15458.1"/>
    <property type="match status" value="1"/>
</dbReference>
<dbReference type="PANTHER" id="PTHR32502:SF2">
    <property type="entry name" value="D-TAGATOSE-1,6-BISPHOSPHATE ALDOLASE SUBUNIT KBAZ"/>
    <property type="match status" value="1"/>
</dbReference>
<dbReference type="PANTHER" id="PTHR32502">
    <property type="entry name" value="N-ACETYLGALACTOSAMINE PERMEASE II COMPONENT-RELATED"/>
    <property type="match status" value="1"/>
</dbReference>
<dbReference type="Pfam" id="PF08013">
    <property type="entry name" value="GatZ_KbaZ-like"/>
    <property type="match status" value="1"/>
</dbReference>
<dbReference type="PIRSF" id="PIRSF009264">
    <property type="entry name" value="TagBP_ald_AgaZ"/>
    <property type="match status" value="1"/>
</dbReference>
<dbReference type="SUPFAM" id="SSF51569">
    <property type="entry name" value="Aldolase"/>
    <property type="match status" value="1"/>
</dbReference>
<reference key="1">
    <citation type="journal article" date="2001" name="Nature">
        <title>Genome sequence of enterohaemorrhagic Escherichia coli O157:H7.</title>
        <authorList>
            <person name="Perna N.T."/>
            <person name="Plunkett G. III"/>
            <person name="Burland V."/>
            <person name="Mau B."/>
            <person name="Glasner J.D."/>
            <person name="Rose D.J."/>
            <person name="Mayhew G.F."/>
            <person name="Evans P.S."/>
            <person name="Gregor J."/>
            <person name="Kirkpatrick H.A."/>
            <person name="Posfai G."/>
            <person name="Hackett J."/>
            <person name="Klink S."/>
            <person name="Boutin A."/>
            <person name="Shao Y."/>
            <person name="Miller L."/>
            <person name="Grotbeck E.J."/>
            <person name="Davis N.W."/>
            <person name="Lim A."/>
            <person name="Dimalanta E.T."/>
            <person name="Potamousis K."/>
            <person name="Apodaca J."/>
            <person name="Anantharaman T.S."/>
            <person name="Lin J."/>
            <person name="Yen G."/>
            <person name="Schwartz D.C."/>
            <person name="Welch R.A."/>
            <person name="Blattner F.R."/>
        </authorList>
    </citation>
    <scope>NUCLEOTIDE SEQUENCE [LARGE SCALE GENOMIC DNA]</scope>
    <source>
        <strain>O157:H7 / EDL933 / ATCC 700927 / EHEC</strain>
    </source>
</reference>
<reference key="2">
    <citation type="journal article" date="2001" name="DNA Res.">
        <title>Complete genome sequence of enterohemorrhagic Escherichia coli O157:H7 and genomic comparison with a laboratory strain K-12.</title>
        <authorList>
            <person name="Hayashi T."/>
            <person name="Makino K."/>
            <person name="Ohnishi M."/>
            <person name="Kurokawa K."/>
            <person name="Ishii K."/>
            <person name="Yokoyama K."/>
            <person name="Han C.-G."/>
            <person name="Ohtsubo E."/>
            <person name="Nakayama K."/>
            <person name="Murata T."/>
            <person name="Tanaka M."/>
            <person name="Tobe T."/>
            <person name="Iida T."/>
            <person name="Takami H."/>
            <person name="Honda T."/>
            <person name="Sasakawa C."/>
            <person name="Ogasawara N."/>
            <person name="Yasunaga T."/>
            <person name="Kuhara S."/>
            <person name="Shiba T."/>
            <person name="Hattori M."/>
            <person name="Shinagawa H."/>
        </authorList>
    </citation>
    <scope>NUCLEOTIDE SEQUENCE [LARGE SCALE GENOMIC DNA]</scope>
    <source>
        <strain>O157:H7 / Sakai / RIMD 0509952 / EHEC</strain>
    </source>
</reference>
<name>KBAZ_ECO57</name>
<proteinExistence type="inferred from homology"/>
<feature type="chain" id="PRO_0000372532" description="D-tagatose-1,6-bisphosphate aldolase subunit KbaZ">
    <location>
        <begin position="1"/>
        <end position="426"/>
    </location>
</feature>
<protein>
    <recommendedName>
        <fullName evidence="1">D-tagatose-1,6-bisphosphate aldolase subunit KbaZ</fullName>
    </recommendedName>
</protein>
<sequence length="426" mass="47177">MKHLTEMVRQHKAGKTNGIYAVCSAHPLVLEAAIRYASANQTPLLIEATSNQVDQFGGYTGMTPADFRGFVCQLADSLNFPQDALILGGDHLGPNRWQNLPAAQAMANADDLIKSYVAAGFKKIHLDCSMSCQDDPIPLTDDIVAERAARLAKVAEETCLEHFGEADLEYVIGTEVPVPGGAHETLSELAVTTPDAARATLEAHRHAFEKQGLNAIWPRIIALVVQPGVEFDHTNVIDYQPAKATALSQMVESYETLIFEAHSTDYQTPQSLRQLVIDHFAILKVGPALTFALREALFSLAAIEEELVPAKACSGLRQVLENVMLNRPEYWQSHYHGDGNARRLARGYSYSDRVRYYWPDSQIDDAFAHLVRNLADSPIPLPLISQYLPLQYVKVRSGELQPTPRELIINHIQDILAQYHTACEGQ</sequence>
<keyword id="KW-1185">Reference proteome</keyword>